<feature type="chain" id="PRO_1000049560" description="Glycerol-3-phosphate dehydrogenase [NAD(P)+]">
    <location>
        <begin position="1"/>
        <end position="338"/>
    </location>
</feature>
<feature type="active site" description="Proton acceptor" evidence="1">
    <location>
        <position position="194"/>
    </location>
</feature>
<feature type="binding site" evidence="1">
    <location>
        <position position="13"/>
    </location>
    <ligand>
        <name>NADPH</name>
        <dbReference type="ChEBI" id="CHEBI:57783"/>
    </ligand>
</feature>
<feature type="binding site" evidence="1">
    <location>
        <position position="14"/>
    </location>
    <ligand>
        <name>NADPH</name>
        <dbReference type="ChEBI" id="CHEBI:57783"/>
    </ligand>
</feature>
<feature type="binding site" evidence="1">
    <location>
        <position position="108"/>
    </location>
    <ligand>
        <name>NADPH</name>
        <dbReference type="ChEBI" id="CHEBI:57783"/>
    </ligand>
</feature>
<feature type="binding site" evidence="1">
    <location>
        <position position="108"/>
    </location>
    <ligand>
        <name>sn-glycerol 3-phosphate</name>
        <dbReference type="ChEBI" id="CHEBI:57597"/>
    </ligand>
</feature>
<feature type="binding site" evidence="1">
    <location>
        <position position="139"/>
    </location>
    <ligand>
        <name>sn-glycerol 3-phosphate</name>
        <dbReference type="ChEBI" id="CHEBI:57597"/>
    </ligand>
</feature>
<feature type="binding site" evidence="1">
    <location>
        <position position="141"/>
    </location>
    <ligand>
        <name>sn-glycerol 3-phosphate</name>
        <dbReference type="ChEBI" id="CHEBI:57597"/>
    </ligand>
</feature>
<feature type="binding site" evidence="1">
    <location>
        <position position="143"/>
    </location>
    <ligand>
        <name>NADPH</name>
        <dbReference type="ChEBI" id="CHEBI:57783"/>
    </ligand>
</feature>
<feature type="binding site" evidence="1">
    <location>
        <position position="194"/>
    </location>
    <ligand>
        <name>sn-glycerol 3-phosphate</name>
        <dbReference type="ChEBI" id="CHEBI:57597"/>
    </ligand>
</feature>
<feature type="binding site" evidence="1">
    <location>
        <position position="247"/>
    </location>
    <ligand>
        <name>sn-glycerol 3-phosphate</name>
        <dbReference type="ChEBI" id="CHEBI:57597"/>
    </ligand>
</feature>
<feature type="binding site" evidence="1">
    <location>
        <position position="257"/>
    </location>
    <ligand>
        <name>sn-glycerol 3-phosphate</name>
        <dbReference type="ChEBI" id="CHEBI:57597"/>
    </ligand>
</feature>
<feature type="binding site" evidence="1">
    <location>
        <position position="258"/>
    </location>
    <ligand>
        <name>NADPH</name>
        <dbReference type="ChEBI" id="CHEBI:57783"/>
    </ligand>
</feature>
<feature type="binding site" evidence="1">
    <location>
        <position position="258"/>
    </location>
    <ligand>
        <name>sn-glycerol 3-phosphate</name>
        <dbReference type="ChEBI" id="CHEBI:57597"/>
    </ligand>
</feature>
<feature type="binding site" evidence="1">
    <location>
        <position position="259"/>
    </location>
    <ligand>
        <name>sn-glycerol 3-phosphate</name>
        <dbReference type="ChEBI" id="CHEBI:57597"/>
    </ligand>
</feature>
<feature type="binding site" evidence="1">
    <location>
        <position position="282"/>
    </location>
    <ligand>
        <name>NADPH</name>
        <dbReference type="ChEBI" id="CHEBI:57783"/>
    </ligand>
</feature>
<feature type="binding site" evidence="1">
    <location>
        <position position="284"/>
    </location>
    <ligand>
        <name>NADPH</name>
        <dbReference type="ChEBI" id="CHEBI:57783"/>
    </ligand>
</feature>
<protein>
    <recommendedName>
        <fullName evidence="1">Glycerol-3-phosphate dehydrogenase [NAD(P)+]</fullName>
        <ecNumber evidence="1">1.1.1.94</ecNumber>
    </recommendedName>
    <alternativeName>
        <fullName evidence="1">NAD(P)(+)-dependent glycerol-3-phosphate dehydrogenase</fullName>
    </alternativeName>
    <alternativeName>
        <fullName evidence="1">NAD(P)H-dependent dihydroxyacetone-phosphate reductase</fullName>
    </alternativeName>
</protein>
<accession>A2RCE5</accession>
<comment type="function">
    <text evidence="1">Catalyzes the reduction of the glycolytic intermediate dihydroxyacetone phosphate (DHAP) to sn-glycerol 3-phosphate (G3P), the key precursor for phospholipid synthesis.</text>
</comment>
<comment type="catalytic activity">
    <reaction evidence="1">
        <text>sn-glycerol 3-phosphate + NAD(+) = dihydroxyacetone phosphate + NADH + H(+)</text>
        <dbReference type="Rhea" id="RHEA:11092"/>
        <dbReference type="ChEBI" id="CHEBI:15378"/>
        <dbReference type="ChEBI" id="CHEBI:57540"/>
        <dbReference type="ChEBI" id="CHEBI:57597"/>
        <dbReference type="ChEBI" id="CHEBI:57642"/>
        <dbReference type="ChEBI" id="CHEBI:57945"/>
        <dbReference type="EC" id="1.1.1.94"/>
    </reaction>
    <physiologicalReaction direction="right-to-left" evidence="1">
        <dbReference type="Rhea" id="RHEA:11094"/>
    </physiologicalReaction>
</comment>
<comment type="catalytic activity">
    <reaction evidence="1">
        <text>sn-glycerol 3-phosphate + NADP(+) = dihydroxyacetone phosphate + NADPH + H(+)</text>
        <dbReference type="Rhea" id="RHEA:11096"/>
        <dbReference type="ChEBI" id="CHEBI:15378"/>
        <dbReference type="ChEBI" id="CHEBI:57597"/>
        <dbReference type="ChEBI" id="CHEBI:57642"/>
        <dbReference type="ChEBI" id="CHEBI:57783"/>
        <dbReference type="ChEBI" id="CHEBI:58349"/>
        <dbReference type="EC" id="1.1.1.94"/>
    </reaction>
    <physiologicalReaction direction="right-to-left" evidence="1">
        <dbReference type="Rhea" id="RHEA:11098"/>
    </physiologicalReaction>
</comment>
<comment type="pathway">
    <text evidence="1">Membrane lipid metabolism; glycerophospholipid metabolism.</text>
</comment>
<comment type="subcellular location">
    <subcellularLocation>
        <location evidence="1">Cytoplasm</location>
    </subcellularLocation>
</comment>
<comment type="similarity">
    <text evidence="1">Belongs to the NAD-dependent glycerol-3-phosphate dehydrogenase family.</text>
</comment>
<evidence type="ECO:0000255" key="1">
    <source>
        <dbReference type="HAMAP-Rule" id="MF_00394"/>
    </source>
</evidence>
<dbReference type="EC" id="1.1.1.94" evidence="1"/>
<dbReference type="EMBL" id="AM295007">
    <property type="protein sequence ID" value="CAM29517.1"/>
    <property type="molecule type" value="Genomic_DNA"/>
</dbReference>
<dbReference type="RefSeq" id="WP_002986123.1">
    <property type="nucleotide sequence ID" value="NC_009332.1"/>
</dbReference>
<dbReference type="SMR" id="A2RCE5"/>
<dbReference type="KEGG" id="spf:SpyM50173"/>
<dbReference type="HOGENOM" id="CLU_033449_0_2_9"/>
<dbReference type="UniPathway" id="UPA00940"/>
<dbReference type="GO" id="GO:0005829">
    <property type="term" value="C:cytosol"/>
    <property type="evidence" value="ECO:0007669"/>
    <property type="project" value="TreeGrafter"/>
</dbReference>
<dbReference type="GO" id="GO:0047952">
    <property type="term" value="F:glycerol-3-phosphate dehydrogenase [NAD(P)+] activity"/>
    <property type="evidence" value="ECO:0007669"/>
    <property type="project" value="UniProtKB-UniRule"/>
</dbReference>
<dbReference type="GO" id="GO:0051287">
    <property type="term" value="F:NAD binding"/>
    <property type="evidence" value="ECO:0007669"/>
    <property type="project" value="InterPro"/>
</dbReference>
<dbReference type="GO" id="GO:0005975">
    <property type="term" value="P:carbohydrate metabolic process"/>
    <property type="evidence" value="ECO:0007669"/>
    <property type="project" value="InterPro"/>
</dbReference>
<dbReference type="GO" id="GO:0046167">
    <property type="term" value="P:glycerol-3-phosphate biosynthetic process"/>
    <property type="evidence" value="ECO:0007669"/>
    <property type="project" value="UniProtKB-UniRule"/>
</dbReference>
<dbReference type="GO" id="GO:0046168">
    <property type="term" value="P:glycerol-3-phosphate catabolic process"/>
    <property type="evidence" value="ECO:0007669"/>
    <property type="project" value="InterPro"/>
</dbReference>
<dbReference type="GO" id="GO:0006650">
    <property type="term" value="P:glycerophospholipid metabolic process"/>
    <property type="evidence" value="ECO:0007669"/>
    <property type="project" value="UniProtKB-UniRule"/>
</dbReference>
<dbReference type="GO" id="GO:0008654">
    <property type="term" value="P:phospholipid biosynthetic process"/>
    <property type="evidence" value="ECO:0007669"/>
    <property type="project" value="UniProtKB-KW"/>
</dbReference>
<dbReference type="FunFam" id="1.10.1040.10:FF:000001">
    <property type="entry name" value="Glycerol-3-phosphate dehydrogenase [NAD(P)+]"/>
    <property type="match status" value="1"/>
</dbReference>
<dbReference type="FunFam" id="3.40.50.720:FF:000019">
    <property type="entry name" value="Glycerol-3-phosphate dehydrogenase [NAD(P)+]"/>
    <property type="match status" value="1"/>
</dbReference>
<dbReference type="Gene3D" id="1.10.1040.10">
    <property type="entry name" value="N-(1-d-carboxylethyl)-l-norvaline Dehydrogenase, domain 2"/>
    <property type="match status" value="1"/>
</dbReference>
<dbReference type="Gene3D" id="3.40.50.720">
    <property type="entry name" value="NAD(P)-binding Rossmann-like Domain"/>
    <property type="match status" value="1"/>
</dbReference>
<dbReference type="HAMAP" id="MF_00394">
    <property type="entry name" value="NAD_Glyc3P_dehydrog"/>
    <property type="match status" value="1"/>
</dbReference>
<dbReference type="InterPro" id="IPR008927">
    <property type="entry name" value="6-PGluconate_DH-like_C_sf"/>
</dbReference>
<dbReference type="InterPro" id="IPR013328">
    <property type="entry name" value="6PGD_dom2"/>
</dbReference>
<dbReference type="InterPro" id="IPR006168">
    <property type="entry name" value="G3P_DH_NAD-dep"/>
</dbReference>
<dbReference type="InterPro" id="IPR006109">
    <property type="entry name" value="G3P_DH_NAD-dep_C"/>
</dbReference>
<dbReference type="InterPro" id="IPR011128">
    <property type="entry name" value="G3P_DH_NAD-dep_N"/>
</dbReference>
<dbReference type="InterPro" id="IPR036291">
    <property type="entry name" value="NAD(P)-bd_dom_sf"/>
</dbReference>
<dbReference type="NCBIfam" id="NF000940">
    <property type="entry name" value="PRK00094.1-2"/>
    <property type="match status" value="1"/>
</dbReference>
<dbReference type="NCBIfam" id="NF000941">
    <property type="entry name" value="PRK00094.1-3"/>
    <property type="match status" value="1"/>
</dbReference>
<dbReference type="NCBIfam" id="NF000942">
    <property type="entry name" value="PRK00094.1-4"/>
    <property type="match status" value="1"/>
</dbReference>
<dbReference type="PANTHER" id="PTHR11728">
    <property type="entry name" value="GLYCEROL-3-PHOSPHATE DEHYDROGENASE"/>
    <property type="match status" value="1"/>
</dbReference>
<dbReference type="PANTHER" id="PTHR11728:SF1">
    <property type="entry name" value="GLYCEROL-3-PHOSPHATE DEHYDROGENASE [NAD(+)] 2, CHLOROPLASTIC"/>
    <property type="match status" value="1"/>
</dbReference>
<dbReference type="Pfam" id="PF07479">
    <property type="entry name" value="NAD_Gly3P_dh_C"/>
    <property type="match status" value="1"/>
</dbReference>
<dbReference type="Pfam" id="PF01210">
    <property type="entry name" value="NAD_Gly3P_dh_N"/>
    <property type="match status" value="1"/>
</dbReference>
<dbReference type="PIRSF" id="PIRSF000114">
    <property type="entry name" value="Glycerol-3-P_dh"/>
    <property type="match status" value="1"/>
</dbReference>
<dbReference type="PRINTS" id="PR00077">
    <property type="entry name" value="GPDHDRGNASE"/>
</dbReference>
<dbReference type="SUPFAM" id="SSF48179">
    <property type="entry name" value="6-phosphogluconate dehydrogenase C-terminal domain-like"/>
    <property type="match status" value="1"/>
</dbReference>
<dbReference type="SUPFAM" id="SSF51735">
    <property type="entry name" value="NAD(P)-binding Rossmann-fold domains"/>
    <property type="match status" value="1"/>
</dbReference>
<dbReference type="PROSITE" id="PS00957">
    <property type="entry name" value="NAD_G3PDH"/>
    <property type="match status" value="1"/>
</dbReference>
<keyword id="KW-0963">Cytoplasm</keyword>
<keyword id="KW-0444">Lipid biosynthesis</keyword>
<keyword id="KW-0443">Lipid metabolism</keyword>
<keyword id="KW-0520">NAD</keyword>
<keyword id="KW-0521">NADP</keyword>
<keyword id="KW-0547">Nucleotide-binding</keyword>
<keyword id="KW-0560">Oxidoreductase</keyword>
<keyword id="KW-0594">Phospholipid biosynthesis</keyword>
<keyword id="KW-1208">Phospholipid metabolism</keyword>
<organism>
    <name type="scientific">Streptococcus pyogenes serotype M5 (strain Manfredo)</name>
    <dbReference type="NCBI Taxonomy" id="160491"/>
    <lineage>
        <taxon>Bacteria</taxon>
        <taxon>Bacillati</taxon>
        <taxon>Bacillota</taxon>
        <taxon>Bacilli</taxon>
        <taxon>Lactobacillales</taxon>
        <taxon>Streptococcaceae</taxon>
        <taxon>Streptococcus</taxon>
    </lineage>
</organism>
<sequence length="338" mass="36681">MTKQKVAILGPGSWGTALSQVLNDNGHDVRLWGNIPDQIEEINTKHTNRHYFKDIVLDKNITATLDLGQALSDVDAVLFVVPTKVTRLVARQVAAILDHKVVVMHASKGLEPETHERLSTILEEEIPAHFRSEVVVVSGPSHAEETIVRDITLITAASKDIEAAKYVQSLFSNHYFRLYTNTDVIGVETAGALKNIIAVGAGALHGLGYGDNAKAAVITRGLAEITRLGVKLGADPLTYSGLSGVGDLIVTGTSVHSRNWRAGAALGRGEKLEDIERNMGMVIEGIATTKVAYEIAQDLGVYMPITTAIYKSIYEGADIKESILGMMSNEFRSENEWH</sequence>
<name>GPDA_STRPG</name>
<reference key="1">
    <citation type="journal article" date="2007" name="J. Bacteriol.">
        <title>Complete genome of acute rheumatic fever-associated serotype M5 Streptococcus pyogenes strain Manfredo.</title>
        <authorList>
            <person name="Holden M.T.G."/>
            <person name="Scott A."/>
            <person name="Cherevach I."/>
            <person name="Chillingworth T."/>
            <person name="Churcher C."/>
            <person name="Cronin A."/>
            <person name="Dowd L."/>
            <person name="Feltwell T."/>
            <person name="Hamlin N."/>
            <person name="Holroyd S."/>
            <person name="Jagels K."/>
            <person name="Moule S."/>
            <person name="Mungall K."/>
            <person name="Quail M.A."/>
            <person name="Price C."/>
            <person name="Rabbinowitsch E."/>
            <person name="Sharp S."/>
            <person name="Skelton J."/>
            <person name="Whitehead S."/>
            <person name="Barrell B.G."/>
            <person name="Kehoe M."/>
            <person name="Parkhill J."/>
        </authorList>
    </citation>
    <scope>NUCLEOTIDE SEQUENCE [LARGE SCALE GENOMIC DNA]</scope>
    <source>
        <strain>Manfredo</strain>
    </source>
</reference>
<gene>
    <name evidence="1" type="primary">gpsA</name>
    <name type="ordered locus">SpyM50173</name>
</gene>
<proteinExistence type="inferred from homology"/>